<keyword id="KW-0119">Carbohydrate metabolism</keyword>
<keyword id="KW-0963">Cytoplasm</keyword>
<keyword id="KW-0413">Isomerase</keyword>
<keyword id="KW-1185">Reference proteome</keyword>
<comment type="function">
    <text evidence="1">Catalyzes the interconversion of beta-pyran and beta-furan forms of D-ribose.</text>
</comment>
<comment type="catalytic activity">
    <reaction evidence="1">
        <text>beta-D-ribopyranose = beta-D-ribofuranose</text>
        <dbReference type="Rhea" id="RHEA:25432"/>
        <dbReference type="ChEBI" id="CHEBI:27476"/>
        <dbReference type="ChEBI" id="CHEBI:47002"/>
        <dbReference type="EC" id="5.4.99.62"/>
    </reaction>
</comment>
<comment type="pathway">
    <text evidence="1">Carbohydrate metabolism; D-ribose degradation; D-ribose 5-phosphate from beta-D-ribopyranose: step 1/2.</text>
</comment>
<comment type="subunit">
    <text evidence="1">Homodecamer.</text>
</comment>
<comment type="subcellular location">
    <subcellularLocation>
        <location evidence="1">Cytoplasm</location>
    </subcellularLocation>
</comment>
<comment type="similarity">
    <text evidence="1">Belongs to the RbsD / FucU family. RbsD subfamily.</text>
</comment>
<sequence>MKKTKVINSDLSRVIATMGHFDKLSIGDAGMPVPSSTEKIDLAVDNGIPSFMQVLNNVLEELEVQRIYLAEEIKVQNPKMLTAIKKRLPDTPITFIPHEEMKKDLADCKAFVRTGEMTPYSNILLESGVTF</sequence>
<name>RBSD_LACPL</name>
<organism>
    <name type="scientific">Lactiplantibacillus plantarum (strain ATCC BAA-793 / NCIMB 8826 / WCFS1)</name>
    <name type="common">Lactobacillus plantarum</name>
    <dbReference type="NCBI Taxonomy" id="220668"/>
    <lineage>
        <taxon>Bacteria</taxon>
        <taxon>Bacillati</taxon>
        <taxon>Bacillota</taxon>
        <taxon>Bacilli</taxon>
        <taxon>Lactobacillales</taxon>
        <taxon>Lactobacillaceae</taxon>
        <taxon>Lactiplantibacillus</taxon>
    </lineage>
</organism>
<evidence type="ECO:0000255" key="1">
    <source>
        <dbReference type="HAMAP-Rule" id="MF_01661"/>
    </source>
</evidence>
<accession>Q88RZ2</accession>
<accession>F9ULK6</accession>
<dbReference type="EC" id="5.4.99.62" evidence="1"/>
<dbReference type="EMBL" id="AL935263">
    <property type="protein sequence ID" value="CCC80613.1"/>
    <property type="molecule type" value="Genomic_DNA"/>
</dbReference>
<dbReference type="RefSeq" id="WP_003641603.1">
    <property type="nucleotide sequence ID" value="NC_004567.2"/>
</dbReference>
<dbReference type="RefSeq" id="YP_004891127.1">
    <property type="nucleotide sequence ID" value="NC_004567.2"/>
</dbReference>
<dbReference type="SMR" id="Q88RZ2"/>
<dbReference type="STRING" id="220668.lp_3659"/>
<dbReference type="EnsemblBacteria" id="CCC80613">
    <property type="protein sequence ID" value="CCC80613"/>
    <property type="gene ID" value="lp_3659"/>
</dbReference>
<dbReference type="GeneID" id="89670616"/>
<dbReference type="KEGG" id="lpl:lp_3659"/>
<dbReference type="PATRIC" id="fig|220668.9.peg.3057"/>
<dbReference type="eggNOG" id="COG1869">
    <property type="taxonomic scope" value="Bacteria"/>
</dbReference>
<dbReference type="HOGENOM" id="CLU_135498_0_0_9"/>
<dbReference type="OrthoDB" id="9805009at2"/>
<dbReference type="PhylomeDB" id="Q88RZ2"/>
<dbReference type="UniPathway" id="UPA00916">
    <property type="reaction ID" value="UER00888"/>
</dbReference>
<dbReference type="Proteomes" id="UP000000432">
    <property type="component" value="Chromosome"/>
</dbReference>
<dbReference type="GO" id="GO:0005829">
    <property type="term" value="C:cytosol"/>
    <property type="evidence" value="ECO:0007669"/>
    <property type="project" value="TreeGrafter"/>
</dbReference>
<dbReference type="GO" id="GO:0062193">
    <property type="term" value="F:D-ribose pyranase activity"/>
    <property type="evidence" value="ECO:0007669"/>
    <property type="project" value="UniProtKB-EC"/>
</dbReference>
<dbReference type="GO" id="GO:0016872">
    <property type="term" value="F:intramolecular lyase activity"/>
    <property type="evidence" value="ECO:0007669"/>
    <property type="project" value="UniProtKB-UniRule"/>
</dbReference>
<dbReference type="GO" id="GO:0048029">
    <property type="term" value="F:monosaccharide binding"/>
    <property type="evidence" value="ECO:0007669"/>
    <property type="project" value="InterPro"/>
</dbReference>
<dbReference type="GO" id="GO:0019303">
    <property type="term" value="P:D-ribose catabolic process"/>
    <property type="evidence" value="ECO:0007669"/>
    <property type="project" value="UniProtKB-UniRule"/>
</dbReference>
<dbReference type="FunFam" id="3.40.1650.10:FF:000004">
    <property type="entry name" value="D-ribose pyranase"/>
    <property type="match status" value="1"/>
</dbReference>
<dbReference type="Gene3D" id="3.40.1650.10">
    <property type="entry name" value="RbsD-like domain"/>
    <property type="match status" value="1"/>
</dbReference>
<dbReference type="HAMAP" id="MF_01661">
    <property type="entry name" value="D_rib_pyranase"/>
    <property type="match status" value="1"/>
</dbReference>
<dbReference type="InterPro" id="IPR023064">
    <property type="entry name" value="D-ribose_pyranase"/>
</dbReference>
<dbReference type="InterPro" id="IPR023750">
    <property type="entry name" value="RbsD-like_sf"/>
</dbReference>
<dbReference type="InterPro" id="IPR007721">
    <property type="entry name" value="RbsD_FucU"/>
</dbReference>
<dbReference type="NCBIfam" id="NF008761">
    <property type="entry name" value="PRK11797.1"/>
    <property type="match status" value="1"/>
</dbReference>
<dbReference type="PANTHER" id="PTHR37831">
    <property type="entry name" value="D-RIBOSE PYRANASE"/>
    <property type="match status" value="1"/>
</dbReference>
<dbReference type="PANTHER" id="PTHR37831:SF1">
    <property type="entry name" value="D-RIBOSE PYRANASE"/>
    <property type="match status" value="1"/>
</dbReference>
<dbReference type="Pfam" id="PF05025">
    <property type="entry name" value="RbsD_FucU"/>
    <property type="match status" value="1"/>
</dbReference>
<dbReference type="SUPFAM" id="SSF102546">
    <property type="entry name" value="RbsD-like"/>
    <property type="match status" value="1"/>
</dbReference>
<proteinExistence type="inferred from homology"/>
<feature type="chain" id="PRO_0000346220" description="D-ribose pyranase">
    <location>
        <begin position="1"/>
        <end position="131"/>
    </location>
</feature>
<feature type="active site" description="Proton donor" evidence="1">
    <location>
        <position position="20"/>
    </location>
</feature>
<feature type="binding site" evidence="1">
    <location>
        <position position="28"/>
    </location>
    <ligand>
        <name>substrate</name>
    </ligand>
</feature>
<feature type="binding site" evidence="1">
    <location>
        <position position="98"/>
    </location>
    <ligand>
        <name>substrate</name>
    </ligand>
</feature>
<feature type="binding site" evidence="1">
    <location>
        <begin position="120"/>
        <end position="122"/>
    </location>
    <ligand>
        <name>substrate</name>
    </ligand>
</feature>
<reference key="1">
    <citation type="journal article" date="2003" name="Proc. Natl. Acad. Sci. U.S.A.">
        <title>Complete genome sequence of Lactobacillus plantarum WCFS1.</title>
        <authorList>
            <person name="Kleerebezem M."/>
            <person name="Boekhorst J."/>
            <person name="van Kranenburg R."/>
            <person name="Molenaar D."/>
            <person name="Kuipers O.P."/>
            <person name="Leer R."/>
            <person name="Tarchini R."/>
            <person name="Peters S.A."/>
            <person name="Sandbrink H.M."/>
            <person name="Fiers M.W.E.J."/>
            <person name="Stiekema W."/>
            <person name="Klein Lankhorst R.M."/>
            <person name="Bron P.A."/>
            <person name="Hoffer S.M."/>
            <person name="Nierop Groot M.N."/>
            <person name="Kerkhoven R."/>
            <person name="De Vries M."/>
            <person name="Ursing B."/>
            <person name="De Vos W.M."/>
            <person name="Siezen R.J."/>
        </authorList>
    </citation>
    <scope>NUCLEOTIDE SEQUENCE [LARGE SCALE GENOMIC DNA]</scope>
    <source>
        <strain>ATCC BAA-793 / NCIMB 8826 / WCFS1</strain>
    </source>
</reference>
<reference key="2">
    <citation type="journal article" date="2012" name="J. Bacteriol.">
        <title>Complete resequencing and reannotation of the Lactobacillus plantarum WCFS1 genome.</title>
        <authorList>
            <person name="Siezen R.J."/>
            <person name="Francke C."/>
            <person name="Renckens B."/>
            <person name="Boekhorst J."/>
            <person name="Wels M."/>
            <person name="Kleerebezem M."/>
            <person name="van Hijum S.A."/>
        </authorList>
    </citation>
    <scope>NUCLEOTIDE SEQUENCE [LARGE SCALE GENOMIC DNA]</scope>
    <scope>GENOME REANNOTATION</scope>
    <source>
        <strain>ATCC BAA-793 / NCIMB 8826 / WCFS1</strain>
    </source>
</reference>
<protein>
    <recommendedName>
        <fullName evidence="1">D-ribose pyranase</fullName>
        <ecNumber evidence="1">5.4.99.62</ecNumber>
    </recommendedName>
</protein>
<gene>
    <name evidence="1" type="primary">rbsD</name>
    <name type="ordered locus">lp_3659</name>
</gene>